<name>Y1475_SHEON</name>
<reference key="1">
    <citation type="journal article" date="2002" name="Nat. Biotechnol.">
        <title>Genome sequence of the dissimilatory metal ion-reducing bacterium Shewanella oneidensis.</title>
        <authorList>
            <person name="Heidelberg J.F."/>
            <person name="Paulsen I.T."/>
            <person name="Nelson K.E."/>
            <person name="Gaidos E.J."/>
            <person name="Nelson W.C."/>
            <person name="Read T.D."/>
            <person name="Eisen J.A."/>
            <person name="Seshadri R."/>
            <person name="Ward N.L."/>
            <person name="Methe B.A."/>
            <person name="Clayton R.A."/>
            <person name="Meyer T."/>
            <person name="Tsapin A."/>
            <person name="Scott J."/>
            <person name="Beanan M.J."/>
            <person name="Brinkac L.M."/>
            <person name="Daugherty S.C."/>
            <person name="DeBoy R.T."/>
            <person name="Dodson R.J."/>
            <person name="Durkin A.S."/>
            <person name="Haft D.H."/>
            <person name="Kolonay J.F."/>
            <person name="Madupu R."/>
            <person name="Peterson J.D."/>
            <person name="Umayam L.A."/>
            <person name="White O."/>
            <person name="Wolf A.M."/>
            <person name="Vamathevan J.J."/>
            <person name="Weidman J.F."/>
            <person name="Impraim M."/>
            <person name="Lee K."/>
            <person name="Berry K.J."/>
            <person name="Lee C."/>
            <person name="Mueller J."/>
            <person name="Khouri H.M."/>
            <person name="Gill J."/>
            <person name="Utterback T.R."/>
            <person name="McDonald L.A."/>
            <person name="Feldblyum T.V."/>
            <person name="Smith H.O."/>
            <person name="Venter J.C."/>
            <person name="Nealson K.H."/>
            <person name="Fraser C.M."/>
        </authorList>
    </citation>
    <scope>NUCLEOTIDE SEQUENCE [LARGE SCALE GENOMIC DNA]</scope>
    <source>
        <strain>ATCC 700550 / JCM 31522 / CIP 106686 / LMG 19005 / NCIMB 14063 / MR-1</strain>
    </source>
</reference>
<protein>
    <recommendedName>
        <fullName evidence="1">UPF0125 protein SO_1475</fullName>
    </recommendedName>
</protein>
<keyword id="KW-1185">Reference proteome</keyword>
<comment type="similarity">
    <text evidence="1">Belongs to the UPF0125 (RnfH) family.</text>
</comment>
<gene>
    <name type="ordered locus">SO_1475</name>
</gene>
<feature type="chain" id="PRO_0000192501" description="UPF0125 protein SO_1475">
    <location>
        <begin position="1"/>
        <end position="111"/>
    </location>
</feature>
<feature type="region of interest" description="Disordered" evidence="2">
    <location>
        <begin position="88"/>
        <end position="111"/>
    </location>
</feature>
<proteinExistence type="inferred from homology"/>
<accession>Q8EGW6</accession>
<evidence type="ECO:0000255" key="1">
    <source>
        <dbReference type="HAMAP-Rule" id="MF_00460"/>
    </source>
</evidence>
<evidence type="ECO:0000256" key="2">
    <source>
        <dbReference type="SAM" id="MobiDB-lite"/>
    </source>
</evidence>
<organism>
    <name type="scientific">Shewanella oneidensis (strain ATCC 700550 / JCM 31522 / CIP 106686 / LMG 19005 / NCIMB 14063 / MR-1)</name>
    <dbReference type="NCBI Taxonomy" id="211586"/>
    <lineage>
        <taxon>Bacteria</taxon>
        <taxon>Pseudomonadati</taxon>
        <taxon>Pseudomonadota</taxon>
        <taxon>Gammaproteobacteria</taxon>
        <taxon>Alteromonadales</taxon>
        <taxon>Shewanellaceae</taxon>
        <taxon>Shewanella</taxon>
    </lineage>
</organism>
<sequence>MTNEADKFVVDVIYALPTQQKVISVSVLPGTSAIDIVRQSNMVSFFPEIELETVKLGVFSNVVKHDQVILPGQRVEIYRPLIADPKDVRRRRADKAKDEGRANKVTGGRVS</sequence>
<dbReference type="EMBL" id="AE014299">
    <property type="protein sequence ID" value="AAN54536.1"/>
    <property type="molecule type" value="Genomic_DNA"/>
</dbReference>
<dbReference type="RefSeq" id="NP_717091.1">
    <property type="nucleotide sequence ID" value="NC_004347.2"/>
</dbReference>
<dbReference type="RefSeq" id="WP_011071663.1">
    <property type="nucleotide sequence ID" value="NC_004347.2"/>
</dbReference>
<dbReference type="SMR" id="Q8EGW6"/>
<dbReference type="STRING" id="211586.SO_1475"/>
<dbReference type="PaxDb" id="211586-SO_1475"/>
<dbReference type="KEGG" id="son:SO_1475"/>
<dbReference type="PATRIC" id="fig|211586.12.peg.1420"/>
<dbReference type="eggNOG" id="COG2914">
    <property type="taxonomic scope" value="Bacteria"/>
</dbReference>
<dbReference type="HOGENOM" id="CLU_150721_1_0_6"/>
<dbReference type="OrthoDB" id="9796575at2"/>
<dbReference type="PhylomeDB" id="Q8EGW6"/>
<dbReference type="BioCyc" id="SONE211586:G1GMP-1365-MONOMER"/>
<dbReference type="Proteomes" id="UP000008186">
    <property type="component" value="Chromosome"/>
</dbReference>
<dbReference type="Gene3D" id="3.10.20.280">
    <property type="entry name" value="RnfH-like"/>
    <property type="match status" value="1"/>
</dbReference>
<dbReference type="HAMAP" id="MF_00460">
    <property type="entry name" value="UPF0125_RnfH"/>
    <property type="match status" value="1"/>
</dbReference>
<dbReference type="InterPro" id="IPR016155">
    <property type="entry name" value="Mopterin_synth/thiamin_S_b"/>
</dbReference>
<dbReference type="InterPro" id="IPR005346">
    <property type="entry name" value="RnfH"/>
</dbReference>
<dbReference type="InterPro" id="IPR037021">
    <property type="entry name" value="RnfH_sf"/>
</dbReference>
<dbReference type="NCBIfam" id="NF002490">
    <property type="entry name" value="PRK01777.1"/>
    <property type="match status" value="1"/>
</dbReference>
<dbReference type="PANTHER" id="PTHR37483">
    <property type="entry name" value="UPF0125 PROTEIN RATB"/>
    <property type="match status" value="1"/>
</dbReference>
<dbReference type="PANTHER" id="PTHR37483:SF1">
    <property type="entry name" value="UPF0125 PROTEIN RATB"/>
    <property type="match status" value="1"/>
</dbReference>
<dbReference type="Pfam" id="PF03658">
    <property type="entry name" value="Ub-RnfH"/>
    <property type="match status" value="1"/>
</dbReference>
<dbReference type="SUPFAM" id="SSF54285">
    <property type="entry name" value="MoaD/ThiS"/>
    <property type="match status" value="1"/>
</dbReference>